<protein>
    <recommendedName>
        <fullName evidence="1">Phosphatidylglycerol--prolipoprotein diacylglyceryl transferase</fullName>
        <ecNumber evidence="1">2.5.1.145</ecNumber>
    </recommendedName>
</protein>
<keyword id="KW-1003">Cell membrane</keyword>
<keyword id="KW-0472">Membrane</keyword>
<keyword id="KW-1185">Reference proteome</keyword>
<keyword id="KW-0808">Transferase</keyword>
<keyword id="KW-0812">Transmembrane</keyword>
<keyword id="KW-1133">Transmembrane helix</keyword>
<gene>
    <name evidence="1" type="primary">lgt</name>
    <name type="ordered locus">MYCGA7150</name>
    <name type="ORF">MGA_0597</name>
</gene>
<name>LGT_MYCGA</name>
<sequence>MYTTGNHTINDSFGTAFMIGSFDVRYYGILYATGILVAIIAGILTLKYKYKVDDNPYFYYVFIGIISIIFGARTWSFIIGDSIVGVTPFFAIHQGGLAIQGGVIFTITTGLIFFFFILRKPKYYVKKNYLVYENHNLVTKTFYKQASMWIYADAIIPTILIGQAIGRWGNFFNHEVYGQGLTAEQALNQWGFLKVLMPGVFEHMFINENGVTLFRVPIFLIESFFNVIAFIIIVFLLDFVKELKTGGRTMLYFFTTGIIRLIIETQRDSQFKFVTSIVTSVLFLLGGSIGFIFTQWIFPRFRNKKNYFFLFNKVKIYFIGLFKNYLNKYKNLTKEEIRKKLEPSSTIYSKNFSEMFFYADDYDLMIKKD</sequence>
<dbReference type="EC" id="2.5.1.145" evidence="1"/>
<dbReference type="EMBL" id="AE015450">
    <property type="protein sequence ID" value="AAP57065.1"/>
    <property type="molecule type" value="Genomic_DNA"/>
</dbReference>
<dbReference type="RefSeq" id="WP_011113978.1">
    <property type="nucleotide sequence ID" value="NC_004829.2"/>
</dbReference>
<dbReference type="SMR" id="Q7NAE3"/>
<dbReference type="GeneID" id="93510555"/>
<dbReference type="KEGG" id="mga:MGA_0597"/>
<dbReference type="PATRIC" id="fig|233150.7.peg.805"/>
<dbReference type="HOGENOM" id="CLU_013386_0_2_14"/>
<dbReference type="OrthoDB" id="871140at2"/>
<dbReference type="UniPathway" id="UPA00664"/>
<dbReference type="Proteomes" id="UP000001418">
    <property type="component" value="Chromosome"/>
</dbReference>
<dbReference type="GO" id="GO:0005886">
    <property type="term" value="C:plasma membrane"/>
    <property type="evidence" value="ECO:0007669"/>
    <property type="project" value="UniProtKB-SubCell"/>
</dbReference>
<dbReference type="GO" id="GO:0008961">
    <property type="term" value="F:phosphatidylglycerol-prolipoprotein diacylglyceryl transferase activity"/>
    <property type="evidence" value="ECO:0007669"/>
    <property type="project" value="UniProtKB-UniRule"/>
</dbReference>
<dbReference type="GO" id="GO:0042158">
    <property type="term" value="P:lipoprotein biosynthetic process"/>
    <property type="evidence" value="ECO:0007669"/>
    <property type="project" value="UniProtKB-UniRule"/>
</dbReference>
<dbReference type="HAMAP" id="MF_01147">
    <property type="entry name" value="Lgt"/>
    <property type="match status" value="1"/>
</dbReference>
<dbReference type="InterPro" id="IPR001640">
    <property type="entry name" value="Lgt"/>
</dbReference>
<dbReference type="NCBIfam" id="TIGR00544">
    <property type="entry name" value="lgt"/>
    <property type="match status" value="1"/>
</dbReference>
<dbReference type="PANTHER" id="PTHR30589:SF0">
    <property type="entry name" value="PHOSPHATIDYLGLYCEROL--PROLIPOPROTEIN DIACYLGLYCERYL TRANSFERASE"/>
    <property type="match status" value="1"/>
</dbReference>
<dbReference type="PANTHER" id="PTHR30589">
    <property type="entry name" value="PROLIPOPROTEIN DIACYLGLYCERYL TRANSFERASE"/>
    <property type="match status" value="1"/>
</dbReference>
<dbReference type="Pfam" id="PF01790">
    <property type="entry name" value="LGT"/>
    <property type="match status" value="2"/>
</dbReference>
<dbReference type="PROSITE" id="PS01311">
    <property type="entry name" value="LGT"/>
    <property type="match status" value="1"/>
</dbReference>
<reference key="1">
    <citation type="journal article" date="2003" name="Microbiology">
        <title>The complete genome sequence of the avian pathogen Mycoplasma gallisepticum strain R(low).</title>
        <authorList>
            <person name="Papazisi L."/>
            <person name="Gorton T.S."/>
            <person name="Kutish G."/>
            <person name="Markham P.F."/>
            <person name="Browning G.F."/>
            <person name="Nguyen D.K."/>
            <person name="Swartzell S."/>
            <person name="Madan A."/>
            <person name="Mahairas G."/>
            <person name="Geary S.J."/>
        </authorList>
    </citation>
    <scope>NUCLEOTIDE SEQUENCE [LARGE SCALE GENOMIC DNA]</scope>
    <source>
        <strain>R(low / passage 15 / clone 2)</strain>
    </source>
</reference>
<evidence type="ECO:0000255" key="1">
    <source>
        <dbReference type="HAMAP-Rule" id="MF_01147"/>
    </source>
</evidence>
<accession>Q7NAE3</accession>
<feature type="chain" id="PRO_0000172632" description="Phosphatidylglycerol--prolipoprotein diacylglyceryl transferase">
    <location>
        <begin position="1"/>
        <end position="369"/>
    </location>
</feature>
<feature type="transmembrane region" description="Helical" evidence="1">
    <location>
        <begin position="26"/>
        <end position="46"/>
    </location>
</feature>
<feature type="transmembrane region" description="Helical" evidence="1">
    <location>
        <begin position="60"/>
        <end position="80"/>
    </location>
</feature>
<feature type="transmembrane region" description="Helical" evidence="1">
    <location>
        <begin position="97"/>
        <end position="117"/>
    </location>
</feature>
<feature type="transmembrane region" description="Helical" evidence="1">
    <location>
        <begin position="216"/>
        <end position="236"/>
    </location>
</feature>
<feature type="transmembrane region" description="Helical" evidence="1">
    <location>
        <begin position="273"/>
        <end position="293"/>
    </location>
</feature>
<feature type="binding site" evidence="1">
    <location>
        <position position="167"/>
    </location>
    <ligand>
        <name>a 1,2-diacyl-sn-glycero-3-phospho-(1'-sn-glycerol)</name>
        <dbReference type="ChEBI" id="CHEBI:64716"/>
    </ligand>
</feature>
<proteinExistence type="inferred from homology"/>
<comment type="function">
    <text evidence="1">Catalyzes the transfer of the diacylglyceryl group from phosphatidylglycerol to the sulfhydryl group of the N-terminal cysteine of a prolipoprotein, the first step in the formation of mature lipoproteins.</text>
</comment>
<comment type="catalytic activity">
    <reaction evidence="1">
        <text>L-cysteinyl-[prolipoprotein] + a 1,2-diacyl-sn-glycero-3-phospho-(1'-sn-glycerol) = an S-1,2-diacyl-sn-glyceryl-L-cysteinyl-[prolipoprotein] + sn-glycerol 1-phosphate + H(+)</text>
        <dbReference type="Rhea" id="RHEA:56712"/>
        <dbReference type="Rhea" id="RHEA-COMP:14679"/>
        <dbReference type="Rhea" id="RHEA-COMP:14680"/>
        <dbReference type="ChEBI" id="CHEBI:15378"/>
        <dbReference type="ChEBI" id="CHEBI:29950"/>
        <dbReference type="ChEBI" id="CHEBI:57685"/>
        <dbReference type="ChEBI" id="CHEBI:64716"/>
        <dbReference type="ChEBI" id="CHEBI:140658"/>
        <dbReference type="EC" id="2.5.1.145"/>
    </reaction>
</comment>
<comment type="pathway">
    <text evidence="1">Protein modification; lipoprotein biosynthesis (diacylglyceryl transfer).</text>
</comment>
<comment type="subcellular location">
    <subcellularLocation>
        <location evidence="1">Cell membrane</location>
        <topology evidence="1">Multi-pass membrane protein</topology>
    </subcellularLocation>
</comment>
<comment type="similarity">
    <text evidence="1">Belongs to the Lgt family.</text>
</comment>
<organism>
    <name type="scientific">Mycoplasmoides gallisepticum (strain R(low / passage 15 / clone 2))</name>
    <name type="common">Mycoplasma gallisepticum</name>
    <dbReference type="NCBI Taxonomy" id="710127"/>
    <lineage>
        <taxon>Bacteria</taxon>
        <taxon>Bacillati</taxon>
        <taxon>Mycoplasmatota</taxon>
        <taxon>Mycoplasmoidales</taxon>
        <taxon>Mycoplasmoidaceae</taxon>
        <taxon>Mycoplasmoides</taxon>
    </lineage>
</organism>